<gene>
    <name evidence="1" type="primary">guaAB</name>
    <name type="ordered locus">M1425_2134</name>
</gene>
<keyword id="KW-0067">ATP-binding</keyword>
<keyword id="KW-0332">GMP biosynthesis</keyword>
<keyword id="KW-0436">Ligase</keyword>
<keyword id="KW-0547">Nucleotide-binding</keyword>
<keyword id="KW-0658">Purine biosynthesis</keyword>
<protein>
    <recommendedName>
        <fullName evidence="1">GMP synthase [glutamine-hydrolyzing] subunit B</fullName>
        <ecNumber evidence="1">6.3.5.2</ecNumber>
    </recommendedName>
    <alternativeName>
        <fullName evidence="1">GMP synthetase</fullName>
    </alternativeName>
</protein>
<evidence type="ECO:0000255" key="1">
    <source>
        <dbReference type="HAMAP-Rule" id="MF_00345"/>
    </source>
</evidence>
<accession>C3MRT0</accession>
<organism>
    <name type="scientific">Saccharolobus islandicus (strain M.14.25 / Kamchatka #1)</name>
    <name type="common">Sulfolobus islandicus</name>
    <dbReference type="NCBI Taxonomy" id="427317"/>
    <lineage>
        <taxon>Archaea</taxon>
        <taxon>Thermoproteota</taxon>
        <taxon>Thermoprotei</taxon>
        <taxon>Sulfolobales</taxon>
        <taxon>Sulfolobaceae</taxon>
        <taxon>Saccharolobus</taxon>
    </lineage>
</organism>
<dbReference type="EC" id="6.3.5.2" evidence="1"/>
<dbReference type="EMBL" id="CP001400">
    <property type="protein sequence ID" value="ACP38873.1"/>
    <property type="molecule type" value="Genomic_DNA"/>
</dbReference>
<dbReference type="RefSeq" id="WP_012712098.1">
    <property type="nucleotide sequence ID" value="NC_012588.1"/>
</dbReference>
<dbReference type="SMR" id="C3MRT0"/>
<dbReference type="KEGG" id="sia:M1425_2134"/>
<dbReference type="HOGENOM" id="CLU_014340_0_0_2"/>
<dbReference type="UniPathway" id="UPA00189">
    <property type="reaction ID" value="UER00296"/>
</dbReference>
<dbReference type="Proteomes" id="UP000001350">
    <property type="component" value="Chromosome"/>
</dbReference>
<dbReference type="GO" id="GO:0005829">
    <property type="term" value="C:cytosol"/>
    <property type="evidence" value="ECO:0007669"/>
    <property type="project" value="TreeGrafter"/>
</dbReference>
<dbReference type="GO" id="GO:0005524">
    <property type="term" value="F:ATP binding"/>
    <property type="evidence" value="ECO:0007669"/>
    <property type="project" value="UniProtKB-UniRule"/>
</dbReference>
<dbReference type="GO" id="GO:0003921">
    <property type="term" value="F:GMP synthase activity"/>
    <property type="evidence" value="ECO:0007669"/>
    <property type="project" value="InterPro"/>
</dbReference>
<dbReference type="CDD" id="cd01997">
    <property type="entry name" value="GMP_synthase_C"/>
    <property type="match status" value="1"/>
</dbReference>
<dbReference type="Gene3D" id="3.30.300.10">
    <property type="match status" value="2"/>
</dbReference>
<dbReference type="Gene3D" id="3.40.50.620">
    <property type="entry name" value="HUPs"/>
    <property type="match status" value="1"/>
</dbReference>
<dbReference type="HAMAP" id="MF_00345">
    <property type="entry name" value="GMP_synthase_B"/>
    <property type="match status" value="1"/>
</dbReference>
<dbReference type="InterPro" id="IPR001674">
    <property type="entry name" value="GMP_synth_C"/>
</dbReference>
<dbReference type="InterPro" id="IPR026598">
    <property type="entry name" value="GMP_synthase_B"/>
</dbReference>
<dbReference type="InterPro" id="IPR025777">
    <property type="entry name" value="GMPS_ATP_PPase_dom"/>
</dbReference>
<dbReference type="InterPro" id="IPR022310">
    <property type="entry name" value="NAD/GMP_synthase"/>
</dbReference>
<dbReference type="InterPro" id="IPR014729">
    <property type="entry name" value="Rossmann-like_a/b/a_fold"/>
</dbReference>
<dbReference type="PANTHER" id="PTHR11922:SF2">
    <property type="entry name" value="GMP SYNTHASE [GLUTAMINE-HYDROLYZING]"/>
    <property type="match status" value="1"/>
</dbReference>
<dbReference type="PANTHER" id="PTHR11922">
    <property type="entry name" value="GMP SYNTHASE-RELATED"/>
    <property type="match status" value="1"/>
</dbReference>
<dbReference type="Pfam" id="PF00958">
    <property type="entry name" value="GMP_synt_C"/>
    <property type="match status" value="1"/>
</dbReference>
<dbReference type="Pfam" id="PF02540">
    <property type="entry name" value="NAD_synthase"/>
    <property type="match status" value="1"/>
</dbReference>
<dbReference type="SUPFAM" id="SSF52402">
    <property type="entry name" value="Adenine nucleotide alpha hydrolases-like"/>
    <property type="match status" value="1"/>
</dbReference>
<dbReference type="SUPFAM" id="SSF54810">
    <property type="entry name" value="GMP synthetase C-terminal dimerisation domain"/>
    <property type="match status" value="1"/>
</dbReference>
<dbReference type="PROSITE" id="PS51553">
    <property type="entry name" value="GMPS_ATP_PPASE"/>
    <property type="match status" value="1"/>
</dbReference>
<name>GUAAB_SACI4</name>
<feature type="chain" id="PRO_1000205317" description="GMP synthase [glutamine-hydrolyzing] subunit B">
    <location>
        <begin position="1"/>
        <end position="367"/>
    </location>
</feature>
<feature type="domain" description="GMPS ATP-PPase" evidence="1">
    <location>
        <begin position="2"/>
        <end position="190"/>
    </location>
</feature>
<feature type="binding site" evidence="1">
    <location>
        <begin position="29"/>
        <end position="35"/>
    </location>
    <ligand>
        <name>ATP</name>
        <dbReference type="ChEBI" id="CHEBI:30616"/>
    </ligand>
</feature>
<comment type="function">
    <text evidence="1">Catalyzes the synthesis of GMP from XMP.</text>
</comment>
<comment type="catalytic activity">
    <reaction evidence="1">
        <text>XMP + L-glutamine + ATP + H2O = GMP + L-glutamate + AMP + diphosphate + 2 H(+)</text>
        <dbReference type="Rhea" id="RHEA:11680"/>
        <dbReference type="ChEBI" id="CHEBI:15377"/>
        <dbReference type="ChEBI" id="CHEBI:15378"/>
        <dbReference type="ChEBI" id="CHEBI:29985"/>
        <dbReference type="ChEBI" id="CHEBI:30616"/>
        <dbReference type="ChEBI" id="CHEBI:33019"/>
        <dbReference type="ChEBI" id="CHEBI:57464"/>
        <dbReference type="ChEBI" id="CHEBI:58115"/>
        <dbReference type="ChEBI" id="CHEBI:58359"/>
        <dbReference type="ChEBI" id="CHEBI:456215"/>
        <dbReference type="EC" id="6.3.5.2"/>
    </reaction>
</comment>
<comment type="pathway">
    <text evidence="1">Purine metabolism; GMP biosynthesis; GMP from XMP (L-Gln route): step 1/1.</text>
</comment>
<comment type="subunit">
    <text evidence="1">Heterodimer composed of a glutamine amidotransferase subunit (A) and a GMP-binding subunit (B).</text>
</comment>
<proteinExistence type="inferred from homology"/>
<reference key="1">
    <citation type="journal article" date="2009" name="Proc. Natl. Acad. Sci. U.S.A.">
        <title>Biogeography of the Sulfolobus islandicus pan-genome.</title>
        <authorList>
            <person name="Reno M.L."/>
            <person name="Held N.L."/>
            <person name="Fields C.J."/>
            <person name="Burke P.V."/>
            <person name="Whitaker R.J."/>
        </authorList>
    </citation>
    <scope>NUCLEOTIDE SEQUENCE [LARGE SCALE GENOMIC DNA]</scope>
    <source>
        <strain>M.14.25 / Kamchatka #1</strain>
    </source>
</reference>
<sequence length="367" mass="41219">MFDPASFVKEIGPQLKQKVGNERVLAAVSGGVDSTTAAVLAYNLLGNKVIPVLIDTGFLRKNEAEKIKAYLSNVLPNLIVVDERETFTSEIEGMEEAEAKRKKFRELFYSSISSLMRKFNAKYLMQGTIAADWVETQGGIKTQHNVLVQIGIDTEKEWGFTLIEPLADLYKNEVRELARYLKLPKEISERQPFPGPGLLVRTIGKLTREKLEVVREANDIVEKYLDPFNYSQYFAVSFESDGNFVILDGIDAFLYKARATGVKGDVRAYGNIAKVECSDINAAKSFVDTLVKYDITHVLCSLDERSNGKYSIAIRAVITEDFMTADYARIPKEVLEKISSEILQKIPNVKEVLYDVTSKPPATIEFE</sequence>